<name>DTD_LISMC</name>
<evidence type="ECO:0000255" key="1">
    <source>
        <dbReference type="HAMAP-Rule" id="MF_00518"/>
    </source>
</evidence>
<comment type="function">
    <text evidence="1">An aminoacyl-tRNA editing enzyme that deacylates mischarged D-aminoacyl-tRNAs. Also deacylates mischarged glycyl-tRNA(Ala), protecting cells against glycine mischarging by AlaRS. Acts via tRNA-based rather than protein-based catalysis; rejects L-amino acids rather than detecting D-amino acids in the active site. By recycling D-aminoacyl-tRNA to D-amino acids and free tRNA molecules, this enzyme counteracts the toxicity associated with the formation of D-aminoacyl-tRNA entities in vivo and helps enforce protein L-homochirality.</text>
</comment>
<comment type="catalytic activity">
    <reaction evidence="1">
        <text>glycyl-tRNA(Ala) + H2O = tRNA(Ala) + glycine + H(+)</text>
        <dbReference type="Rhea" id="RHEA:53744"/>
        <dbReference type="Rhea" id="RHEA-COMP:9657"/>
        <dbReference type="Rhea" id="RHEA-COMP:13640"/>
        <dbReference type="ChEBI" id="CHEBI:15377"/>
        <dbReference type="ChEBI" id="CHEBI:15378"/>
        <dbReference type="ChEBI" id="CHEBI:57305"/>
        <dbReference type="ChEBI" id="CHEBI:78442"/>
        <dbReference type="ChEBI" id="CHEBI:78522"/>
        <dbReference type="EC" id="3.1.1.96"/>
    </reaction>
</comment>
<comment type="catalytic activity">
    <reaction evidence="1">
        <text>a D-aminoacyl-tRNA + H2O = a tRNA + a D-alpha-amino acid + H(+)</text>
        <dbReference type="Rhea" id="RHEA:13953"/>
        <dbReference type="Rhea" id="RHEA-COMP:10123"/>
        <dbReference type="Rhea" id="RHEA-COMP:10124"/>
        <dbReference type="ChEBI" id="CHEBI:15377"/>
        <dbReference type="ChEBI" id="CHEBI:15378"/>
        <dbReference type="ChEBI" id="CHEBI:59871"/>
        <dbReference type="ChEBI" id="CHEBI:78442"/>
        <dbReference type="ChEBI" id="CHEBI:79333"/>
        <dbReference type="EC" id="3.1.1.96"/>
    </reaction>
</comment>
<comment type="subunit">
    <text evidence="1">Homodimer.</text>
</comment>
<comment type="subcellular location">
    <subcellularLocation>
        <location evidence="1">Cytoplasm</location>
    </subcellularLocation>
</comment>
<comment type="domain">
    <text evidence="1">A Gly-cisPro motif from one monomer fits into the active site of the other monomer to allow specific chiral rejection of L-amino acids.</text>
</comment>
<comment type="similarity">
    <text evidence="1">Belongs to the DTD family.</text>
</comment>
<gene>
    <name evidence="1" type="primary">dtd</name>
    <name type="ordered locus">Lm4b_01532</name>
</gene>
<sequence>MRVLLQRCYEASVSVEEEVISEIAGGLCLLVGFTHKDTPETVDYMAKKIVGLRIFEDESEKMNISLAERGGAILSVSQFTLYADVSRGKRPSFTKSAPAEKAETLYDLFNQKLTEAGFIVETGVFGAMMDVKIVNHGPVTIMLDSDEMRK</sequence>
<feature type="chain" id="PRO_1000211733" description="D-aminoacyl-tRNA deacylase">
    <location>
        <begin position="1"/>
        <end position="150"/>
    </location>
</feature>
<feature type="short sequence motif" description="Gly-cisPro motif, important for rejection of L-amino acids" evidence="1">
    <location>
        <begin position="137"/>
        <end position="138"/>
    </location>
</feature>
<dbReference type="EC" id="3.1.1.96" evidence="1"/>
<dbReference type="EMBL" id="FM242711">
    <property type="protein sequence ID" value="CAS05294.1"/>
    <property type="molecule type" value="Genomic_DNA"/>
</dbReference>
<dbReference type="RefSeq" id="WP_003731162.1">
    <property type="nucleotide sequence ID" value="NC_012488.1"/>
</dbReference>
<dbReference type="SMR" id="C1KVG9"/>
<dbReference type="KEGG" id="lmc:Lm4b_01532"/>
<dbReference type="HOGENOM" id="CLU_076901_1_0_9"/>
<dbReference type="GO" id="GO:0005737">
    <property type="term" value="C:cytoplasm"/>
    <property type="evidence" value="ECO:0007669"/>
    <property type="project" value="UniProtKB-SubCell"/>
</dbReference>
<dbReference type="GO" id="GO:0051500">
    <property type="term" value="F:D-tyrosyl-tRNA(Tyr) deacylase activity"/>
    <property type="evidence" value="ECO:0007669"/>
    <property type="project" value="TreeGrafter"/>
</dbReference>
<dbReference type="GO" id="GO:0106026">
    <property type="term" value="F:Gly-tRNA(Ala) deacylase activity"/>
    <property type="evidence" value="ECO:0007669"/>
    <property type="project" value="UniProtKB-UniRule"/>
</dbReference>
<dbReference type="GO" id="GO:0043908">
    <property type="term" value="F:Ser(Gly)-tRNA(Ala) hydrolase activity"/>
    <property type="evidence" value="ECO:0007669"/>
    <property type="project" value="UniProtKB-UniRule"/>
</dbReference>
<dbReference type="GO" id="GO:0000049">
    <property type="term" value="F:tRNA binding"/>
    <property type="evidence" value="ECO:0007669"/>
    <property type="project" value="UniProtKB-UniRule"/>
</dbReference>
<dbReference type="GO" id="GO:0019478">
    <property type="term" value="P:D-amino acid catabolic process"/>
    <property type="evidence" value="ECO:0007669"/>
    <property type="project" value="UniProtKB-UniRule"/>
</dbReference>
<dbReference type="CDD" id="cd00563">
    <property type="entry name" value="Dtyr_deacylase"/>
    <property type="match status" value="1"/>
</dbReference>
<dbReference type="FunFam" id="3.50.80.10:FF:000007">
    <property type="entry name" value="D-aminoacyl-tRNA deacylase"/>
    <property type="match status" value="1"/>
</dbReference>
<dbReference type="Gene3D" id="3.50.80.10">
    <property type="entry name" value="D-tyrosyl-tRNA(Tyr) deacylase"/>
    <property type="match status" value="1"/>
</dbReference>
<dbReference type="HAMAP" id="MF_00518">
    <property type="entry name" value="Deacylase_Dtd"/>
    <property type="match status" value="1"/>
</dbReference>
<dbReference type="InterPro" id="IPR003732">
    <property type="entry name" value="Daa-tRNA_deacyls_DTD"/>
</dbReference>
<dbReference type="InterPro" id="IPR023509">
    <property type="entry name" value="DTD-like_sf"/>
</dbReference>
<dbReference type="NCBIfam" id="TIGR00256">
    <property type="entry name" value="D-aminoacyl-tRNA deacylase"/>
    <property type="match status" value="1"/>
</dbReference>
<dbReference type="PANTHER" id="PTHR10472:SF5">
    <property type="entry name" value="D-AMINOACYL-TRNA DEACYLASE 1"/>
    <property type="match status" value="1"/>
</dbReference>
<dbReference type="PANTHER" id="PTHR10472">
    <property type="entry name" value="D-TYROSYL-TRNA TYR DEACYLASE"/>
    <property type="match status" value="1"/>
</dbReference>
<dbReference type="Pfam" id="PF02580">
    <property type="entry name" value="Tyr_Deacylase"/>
    <property type="match status" value="1"/>
</dbReference>
<dbReference type="SUPFAM" id="SSF69500">
    <property type="entry name" value="DTD-like"/>
    <property type="match status" value="1"/>
</dbReference>
<organism>
    <name type="scientific">Listeria monocytogenes serotype 4b (strain CLIP80459)</name>
    <dbReference type="NCBI Taxonomy" id="568819"/>
    <lineage>
        <taxon>Bacteria</taxon>
        <taxon>Bacillati</taxon>
        <taxon>Bacillota</taxon>
        <taxon>Bacilli</taxon>
        <taxon>Bacillales</taxon>
        <taxon>Listeriaceae</taxon>
        <taxon>Listeria</taxon>
    </lineage>
</organism>
<keyword id="KW-0963">Cytoplasm</keyword>
<keyword id="KW-0378">Hydrolase</keyword>
<keyword id="KW-0694">RNA-binding</keyword>
<keyword id="KW-0820">tRNA-binding</keyword>
<protein>
    <recommendedName>
        <fullName evidence="1">D-aminoacyl-tRNA deacylase</fullName>
        <shortName evidence="1">DTD</shortName>
        <ecNumber evidence="1">3.1.1.96</ecNumber>
    </recommendedName>
    <alternativeName>
        <fullName evidence="1">Gly-tRNA(Ala) deacylase</fullName>
    </alternativeName>
</protein>
<accession>C1KVG9</accession>
<proteinExistence type="inferred from homology"/>
<reference key="1">
    <citation type="journal article" date="2012" name="BMC Genomics">
        <title>Comparative genomics and transcriptomics of lineages I, II, and III strains of Listeria monocytogenes.</title>
        <authorList>
            <person name="Hain T."/>
            <person name="Ghai R."/>
            <person name="Billion A."/>
            <person name="Kuenne C.T."/>
            <person name="Steinweg C."/>
            <person name="Izar B."/>
            <person name="Mohamed W."/>
            <person name="Mraheil M."/>
            <person name="Domann E."/>
            <person name="Schaffrath S."/>
            <person name="Karst U."/>
            <person name="Goesmann A."/>
            <person name="Oehm S."/>
            <person name="Puhler A."/>
            <person name="Merkl R."/>
            <person name="Vorwerk S."/>
            <person name="Glaser P."/>
            <person name="Garrido P."/>
            <person name="Rusniok C."/>
            <person name="Buchrieser C."/>
            <person name="Goebel W."/>
            <person name="Chakraborty T."/>
        </authorList>
    </citation>
    <scope>NUCLEOTIDE SEQUENCE [LARGE SCALE GENOMIC DNA]</scope>
    <source>
        <strain>CLIP80459</strain>
    </source>
</reference>